<reference key="1">
    <citation type="journal article" date="2005" name="Jpn. Agric. Res. Q.">
        <title>Genome sequence of Xanthomonas oryzae pv. oryzae suggests contribution of large numbers of effector genes and insertion sequences to its race diversity.</title>
        <authorList>
            <person name="Ochiai H."/>
            <person name="Inoue Y."/>
            <person name="Takeya M."/>
            <person name="Sasaki A."/>
            <person name="Kaku H."/>
        </authorList>
    </citation>
    <scope>NUCLEOTIDE SEQUENCE [LARGE SCALE GENOMIC DNA]</scope>
    <source>
        <strain>MAFF 311018</strain>
    </source>
</reference>
<sequence length="337" mass="36944">MTQPTARSIPLQVVSGDTAAPAPLQTGVKQIGGDKIHRSPVQFVDAPVLRKPSWIRVRIPSGNAVQNLKAKLRENRLVTVCEEASCPNIHECFSHGTATFMILGEVCTRRCSFCDVAHGRPKPPDANEPASLAITVADMGLKYVVVTSVDRDDLRDGGAQHFVDCISAIRTSSPNTRIEILTPDFRGKGRMDRALDILALSPPDVFNHNIETVPDLYPNVRPGADYQWSLTLLQRFKAQHPSIATKSGIMLGLGETMEQVQATLRDLRAHDVDMITIGQYLQPTPHHHPVMRYWTPEEYKALEEYGNALGFSHVASGPMVRSSYHADRQAAGAGVAA</sequence>
<evidence type="ECO:0000255" key="1">
    <source>
        <dbReference type="HAMAP-Rule" id="MF_00206"/>
    </source>
</evidence>
<evidence type="ECO:0000255" key="2">
    <source>
        <dbReference type="PROSITE-ProRule" id="PRU01266"/>
    </source>
</evidence>
<organism>
    <name type="scientific">Xanthomonas oryzae pv. oryzae (strain MAFF 311018)</name>
    <dbReference type="NCBI Taxonomy" id="342109"/>
    <lineage>
        <taxon>Bacteria</taxon>
        <taxon>Pseudomonadati</taxon>
        <taxon>Pseudomonadota</taxon>
        <taxon>Gammaproteobacteria</taxon>
        <taxon>Lysobacterales</taxon>
        <taxon>Lysobacteraceae</taxon>
        <taxon>Xanthomonas</taxon>
    </lineage>
</organism>
<accession>Q2NYZ2</accession>
<gene>
    <name evidence="1" type="primary">lipA</name>
    <name type="ordered locus">XOO3730</name>
</gene>
<protein>
    <recommendedName>
        <fullName evidence="1">Lipoyl synthase</fullName>
        <ecNumber evidence="1">2.8.1.8</ecNumber>
    </recommendedName>
    <alternativeName>
        <fullName evidence="1">Lip-syn</fullName>
        <shortName evidence="1">LS</shortName>
    </alternativeName>
    <alternativeName>
        <fullName evidence="1">Lipoate synthase</fullName>
    </alternativeName>
    <alternativeName>
        <fullName evidence="1">Lipoic acid synthase</fullName>
    </alternativeName>
    <alternativeName>
        <fullName evidence="1">Sulfur insertion protein LipA</fullName>
    </alternativeName>
</protein>
<dbReference type="EC" id="2.8.1.8" evidence="1"/>
<dbReference type="EMBL" id="AP008229">
    <property type="protein sequence ID" value="BAE70485.1"/>
    <property type="molecule type" value="Genomic_DNA"/>
</dbReference>
<dbReference type="RefSeq" id="WP_011260331.1">
    <property type="nucleotide sequence ID" value="NC_007705.1"/>
</dbReference>
<dbReference type="SMR" id="Q2NYZ2"/>
<dbReference type="KEGG" id="xom:XOO3730"/>
<dbReference type="HOGENOM" id="CLU_033144_2_1_6"/>
<dbReference type="UniPathway" id="UPA00538">
    <property type="reaction ID" value="UER00593"/>
</dbReference>
<dbReference type="GO" id="GO:0005737">
    <property type="term" value="C:cytoplasm"/>
    <property type="evidence" value="ECO:0007669"/>
    <property type="project" value="UniProtKB-SubCell"/>
</dbReference>
<dbReference type="GO" id="GO:0051539">
    <property type="term" value="F:4 iron, 4 sulfur cluster binding"/>
    <property type="evidence" value="ECO:0007669"/>
    <property type="project" value="UniProtKB-UniRule"/>
</dbReference>
<dbReference type="GO" id="GO:0016992">
    <property type="term" value="F:lipoate synthase activity"/>
    <property type="evidence" value="ECO:0007669"/>
    <property type="project" value="UniProtKB-UniRule"/>
</dbReference>
<dbReference type="GO" id="GO:0046872">
    <property type="term" value="F:metal ion binding"/>
    <property type="evidence" value="ECO:0007669"/>
    <property type="project" value="UniProtKB-KW"/>
</dbReference>
<dbReference type="CDD" id="cd01335">
    <property type="entry name" value="Radical_SAM"/>
    <property type="match status" value="1"/>
</dbReference>
<dbReference type="FunFam" id="3.20.20.70:FF:000023">
    <property type="entry name" value="Lipoyl synthase"/>
    <property type="match status" value="1"/>
</dbReference>
<dbReference type="Gene3D" id="3.20.20.70">
    <property type="entry name" value="Aldolase class I"/>
    <property type="match status" value="1"/>
</dbReference>
<dbReference type="HAMAP" id="MF_00206">
    <property type="entry name" value="Lipoyl_synth"/>
    <property type="match status" value="1"/>
</dbReference>
<dbReference type="InterPro" id="IPR013785">
    <property type="entry name" value="Aldolase_TIM"/>
</dbReference>
<dbReference type="InterPro" id="IPR006638">
    <property type="entry name" value="Elp3/MiaA/NifB-like_rSAM"/>
</dbReference>
<dbReference type="InterPro" id="IPR031691">
    <property type="entry name" value="LIAS_N"/>
</dbReference>
<dbReference type="InterPro" id="IPR003698">
    <property type="entry name" value="Lipoyl_synth"/>
</dbReference>
<dbReference type="InterPro" id="IPR007197">
    <property type="entry name" value="rSAM"/>
</dbReference>
<dbReference type="NCBIfam" id="TIGR00510">
    <property type="entry name" value="lipA"/>
    <property type="match status" value="1"/>
</dbReference>
<dbReference type="NCBIfam" id="NF004019">
    <property type="entry name" value="PRK05481.1"/>
    <property type="match status" value="1"/>
</dbReference>
<dbReference type="NCBIfam" id="NF009544">
    <property type="entry name" value="PRK12928.1"/>
    <property type="match status" value="1"/>
</dbReference>
<dbReference type="PANTHER" id="PTHR10949">
    <property type="entry name" value="LIPOYL SYNTHASE"/>
    <property type="match status" value="1"/>
</dbReference>
<dbReference type="PANTHER" id="PTHR10949:SF0">
    <property type="entry name" value="LIPOYL SYNTHASE, MITOCHONDRIAL"/>
    <property type="match status" value="1"/>
</dbReference>
<dbReference type="Pfam" id="PF16881">
    <property type="entry name" value="LIAS_N"/>
    <property type="match status" value="1"/>
</dbReference>
<dbReference type="Pfam" id="PF04055">
    <property type="entry name" value="Radical_SAM"/>
    <property type="match status" value="1"/>
</dbReference>
<dbReference type="PIRSF" id="PIRSF005963">
    <property type="entry name" value="Lipoyl_synth"/>
    <property type="match status" value="1"/>
</dbReference>
<dbReference type="SFLD" id="SFLDF00271">
    <property type="entry name" value="lipoyl_synthase"/>
    <property type="match status" value="1"/>
</dbReference>
<dbReference type="SFLD" id="SFLDG01058">
    <property type="entry name" value="lipoyl_synthase_like"/>
    <property type="match status" value="1"/>
</dbReference>
<dbReference type="SMART" id="SM00729">
    <property type="entry name" value="Elp3"/>
    <property type="match status" value="1"/>
</dbReference>
<dbReference type="SUPFAM" id="SSF102114">
    <property type="entry name" value="Radical SAM enzymes"/>
    <property type="match status" value="1"/>
</dbReference>
<dbReference type="PROSITE" id="PS51918">
    <property type="entry name" value="RADICAL_SAM"/>
    <property type="match status" value="1"/>
</dbReference>
<keyword id="KW-0004">4Fe-4S</keyword>
<keyword id="KW-0963">Cytoplasm</keyword>
<keyword id="KW-0408">Iron</keyword>
<keyword id="KW-0411">Iron-sulfur</keyword>
<keyword id="KW-0479">Metal-binding</keyword>
<keyword id="KW-0949">S-adenosyl-L-methionine</keyword>
<keyword id="KW-0808">Transferase</keyword>
<comment type="function">
    <text evidence="1">Catalyzes the radical-mediated insertion of two sulfur atoms into the C-6 and C-8 positions of the octanoyl moiety bound to the lipoyl domains of lipoate-dependent enzymes, thereby converting the octanoylated domains into lipoylated derivatives.</text>
</comment>
<comment type="catalytic activity">
    <reaction evidence="1">
        <text>[[Fe-S] cluster scaffold protein carrying a second [4Fe-4S](2+) cluster] + N(6)-octanoyl-L-lysyl-[protein] + 2 oxidized [2Fe-2S]-[ferredoxin] + 2 S-adenosyl-L-methionine + 4 H(+) = [[Fe-S] cluster scaffold protein] + N(6)-[(R)-dihydrolipoyl]-L-lysyl-[protein] + 4 Fe(3+) + 2 hydrogen sulfide + 2 5'-deoxyadenosine + 2 L-methionine + 2 reduced [2Fe-2S]-[ferredoxin]</text>
        <dbReference type="Rhea" id="RHEA:16585"/>
        <dbReference type="Rhea" id="RHEA-COMP:9928"/>
        <dbReference type="Rhea" id="RHEA-COMP:10000"/>
        <dbReference type="Rhea" id="RHEA-COMP:10001"/>
        <dbReference type="Rhea" id="RHEA-COMP:10475"/>
        <dbReference type="Rhea" id="RHEA-COMP:14568"/>
        <dbReference type="Rhea" id="RHEA-COMP:14569"/>
        <dbReference type="ChEBI" id="CHEBI:15378"/>
        <dbReference type="ChEBI" id="CHEBI:17319"/>
        <dbReference type="ChEBI" id="CHEBI:29034"/>
        <dbReference type="ChEBI" id="CHEBI:29919"/>
        <dbReference type="ChEBI" id="CHEBI:33722"/>
        <dbReference type="ChEBI" id="CHEBI:33737"/>
        <dbReference type="ChEBI" id="CHEBI:33738"/>
        <dbReference type="ChEBI" id="CHEBI:57844"/>
        <dbReference type="ChEBI" id="CHEBI:59789"/>
        <dbReference type="ChEBI" id="CHEBI:78809"/>
        <dbReference type="ChEBI" id="CHEBI:83100"/>
        <dbReference type="EC" id="2.8.1.8"/>
    </reaction>
</comment>
<comment type="cofactor">
    <cofactor evidence="1">
        <name>[4Fe-4S] cluster</name>
        <dbReference type="ChEBI" id="CHEBI:49883"/>
    </cofactor>
    <text evidence="1">Binds 2 [4Fe-4S] clusters per subunit. One cluster is coordinated with 3 cysteines and an exchangeable S-adenosyl-L-methionine.</text>
</comment>
<comment type="pathway">
    <text evidence="1">Protein modification; protein lipoylation via endogenous pathway; protein N(6)-(lipoyl)lysine from octanoyl-[acyl-carrier-protein]: step 2/2.</text>
</comment>
<comment type="subcellular location">
    <subcellularLocation>
        <location evidence="1">Cytoplasm</location>
    </subcellularLocation>
</comment>
<comment type="similarity">
    <text evidence="1">Belongs to the radical SAM superfamily. Lipoyl synthase family.</text>
</comment>
<proteinExistence type="inferred from homology"/>
<feature type="chain" id="PRO_1000012299" description="Lipoyl synthase">
    <location>
        <begin position="1"/>
        <end position="337"/>
    </location>
</feature>
<feature type="domain" description="Radical SAM core" evidence="2">
    <location>
        <begin position="93"/>
        <end position="312"/>
    </location>
</feature>
<feature type="binding site" evidence="1">
    <location>
        <position position="81"/>
    </location>
    <ligand>
        <name>[4Fe-4S] cluster</name>
        <dbReference type="ChEBI" id="CHEBI:49883"/>
        <label>1</label>
    </ligand>
</feature>
<feature type="binding site" evidence="1">
    <location>
        <position position="86"/>
    </location>
    <ligand>
        <name>[4Fe-4S] cluster</name>
        <dbReference type="ChEBI" id="CHEBI:49883"/>
        <label>1</label>
    </ligand>
</feature>
<feature type="binding site" evidence="1">
    <location>
        <position position="92"/>
    </location>
    <ligand>
        <name>[4Fe-4S] cluster</name>
        <dbReference type="ChEBI" id="CHEBI:49883"/>
        <label>1</label>
    </ligand>
</feature>
<feature type="binding site" evidence="1">
    <location>
        <position position="107"/>
    </location>
    <ligand>
        <name>[4Fe-4S] cluster</name>
        <dbReference type="ChEBI" id="CHEBI:49883"/>
        <label>2</label>
        <note>4Fe-4S-S-AdoMet</note>
    </ligand>
</feature>
<feature type="binding site" evidence="1">
    <location>
        <position position="111"/>
    </location>
    <ligand>
        <name>[4Fe-4S] cluster</name>
        <dbReference type="ChEBI" id="CHEBI:49883"/>
        <label>2</label>
        <note>4Fe-4S-S-AdoMet</note>
    </ligand>
</feature>
<feature type="binding site" evidence="1">
    <location>
        <position position="114"/>
    </location>
    <ligand>
        <name>[4Fe-4S] cluster</name>
        <dbReference type="ChEBI" id="CHEBI:49883"/>
        <label>2</label>
        <note>4Fe-4S-S-AdoMet</note>
    </ligand>
</feature>
<feature type="binding site" evidence="1">
    <location>
        <position position="323"/>
    </location>
    <ligand>
        <name>[4Fe-4S] cluster</name>
        <dbReference type="ChEBI" id="CHEBI:49883"/>
        <label>1</label>
    </ligand>
</feature>
<name>LIPA_XANOM</name>